<sequence length="1155" mass="127271">MPPSLIAVSEFVEETRSDYSSPTTSTFASRMPDCRHTIGVLEERLEFDREGLTKLKKAVKAIHNSGNTHVDNEMFMVRALERLGGKVIEQDEPDIGAAFLKFSVVTKELSALMKTLMQNINNIVMFPVDSMLKSELRGVKGDMKRPFDKAAKDYEAKFIKIEKEKKAQAKEAGMVRTEIDAAVVAEEMEKERRLYQLQTCEYLLKYKDIKTKTGIELLQHLIEYYHALSNYFKDGLQTIEHFGTYIGDLSEKLHEIKQKQDEDRRSLLDLRTVLRSTPDFERVDNVPSSESRSGGAGYSLHQLQGDKHHGVTRQGHLLKKSEGKVRRVWQKRRCRVTSDGFLDIFHADESKPPTRVNLLTCQIKPVPDDKRGFDLISYNRPYHFQAEDEGDQKAWMAVLVNCKEKALTKAFQHANPQMSPSLVELQKTVIRYVQLLPGNDRCCDCGSRNDVTWISLNFGILVCIQCSGVHRDLGVHHSRIQSLTLDNLTTANLLIARAMGNSTLNDIMEAKLGRGKLQHESSMEERYDFIRAKYVAKRYVMRTCSDDNDLRCDLEQAVVNADMSQLLQVWAEGADLTCCLPSSDAGETALHLAVLREMGSTLHIVDFLIQNMPPKGLNKATNPAGLLDVTGKNTALHLCALHDRRECMKLLLRSGADYELKNSQNKTALDIAKEMGHNSCRELIECAIKREKSAFDHINTDWNLPNEDGSTDFSDDETVIDERKSRSRPPSFAGGDSPVLRSRSSTCDSIQSSSSPIANCPSRQFTLPSGLPSYTHSAGTSPKQHISVGQYLGSATNVGGNGPGNGGSSPSSASSQSVRAARNSLNMQSDLGGHVTGARKSTSTANMNSLKKRTAPAPPPGTLGSASSSSFYGTLPHPPRHSQNFDASDIRAINHKNQSLDVAYGTLPHLRSVESSPRGGGGYGYGVSQDPGGSGNGSNNSLMPAMTTFGHKRSPSGESLNRNIHLAGAKLVLPPTGELPTLKHVDKSALTRPKIPPPGPPSEREISNGQSNESISSMDEGPVAPPRKLVNQSANFPDYESWHTDMDSSGGGLDHSAESNVSSSDNDRLNSSPDNPSKTGGAGLGGKFHYNGQRRCRALYDCVADNDDELEFKEGEILIVLNERTDDENWMEGIIEGQPTRKGMFPVSFVHMLPD</sequence>
<evidence type="ECO:0000255" key="1"/>
<evidence type="ECO:0000255" key="2">
    <source>
        <dbReference type="PROSITE-ProRule" id="PRU00145"/>
    </source>
</evidence>
<evidence type="ECO:0000255" key="3">
    <source>
        <dbReference type="PROSITE-ProRule" id="PRU00192"/>
    </source>
</evidence>
<evidence type="ECO:0000255" key="4">
    <source>
        <dbReference type="PROSITE-ProRule" id="PRU00288"/>
    </source>
</evidence>
<evidence type="ECO:0000256" key="5">
    <source>
        <dbReference type="SAM" id="MobiDB-lite"/>
    </source>
</evidence>
<evidence type="ECO:0000269" key="6">
    <source>
    </source>
</evidence>
<evidence type="ECO:0000269" key="7">
    <source>
    </source>
</evidence>
<evidence type="ECO:0000305" key="8"/>
<evidence type="ECO:0000312" key="9">
    <source>
        <dbReference type="EMBL" id="AAL29125.1"/>
    </source>
</evidence>
<evidence type="ECO:0000312" key="10">
    <source>
        <dbReference type="EMBL" id="AAT94481.1"/>
    </source>
</evidence>
<evidence type="ECO:0000312" key="11">
    <source>
        <dbReference type="EMBL" id="ABX00789.1"/>
    </source>
</evidence>
<evidence type="ECO:0000312" key="12">
    <source>
        <dbReference type="FlyBase" id="FBgn0050372"/>
    </source>
</evidence>
<evidence type="ECO:0000312" key="13">
    <source>
        <dbReference type="Proteomes" id="UP000000803"/>
    </source>
</evidence>
<organism evidence="13">
    <name type="scientific">Drosophila melanogaster</name>
    <name type="common">Fruit fly</name>
    <dbReference type="NCBI Taxonomy" id="7227"/>
    <lineage>
        <taxon>Eukaryota</taxon>
        <taxon>Metazoa</taxon>
        <taxon>Ecdysozoa</taxon>
        <taxon>Arthropoda</taxon>
        <taxon>Hexapoda</taxon>
        <taxon>Insecta</taxon>
        <taxon>Pterygota</taxon>
        <taxon>Neoptera</taxon>
        <taxon>Endopterygota</taxon>
        <taxon>Diptera</taxon>
        <taxon>Brachycera</taxon>
        <taxon>Muscomorpha</taxon>
        <taxon>Ephydroidea</taxon>
        <taxon>Drosophilidae</taxon>
        <taxon>Drosophila</taxon>
        <taxon>Sophophora</taxon>
    </lineage>
</organism>
<name>ASAP_DROME</name>
<dbReference type="EMBL" id="AE013599">
    <property type="protein sequence ID" value="AAF59133.4"/>
    <property type="molecule type" value="Genomic_DNA"/>
</dbReference>
<dbReference type="EMBL" id="AE013599">
    <property type="protein sequence ID" value="ACZ94364.1"/>
    <property type="molecule type" value="Genomic_DNA"/>
</dbReference>
<dbReference type="EMBL" id="BT015252">
    <property type="protein sequence ID" value="AAT94481.1"/>
    <property type="molecule type" value="mRNA"/>
</dbReference>
<dbReference type="EMBL" id="BT031167">
    <property type="protein sequence ID" value="ABX00789.1"/>
    <property type="molecule type" value="mRNA"/>
</dbReference>
<dbReference type="EMBL" id="AY061577">
    <property type="protein sequence ID" value="AAL29125.1"/>
    <property type="status" value="ALT_INIT"/>
    <property type="molecule type" value="mRNA"/>
</dbReference>
<dbReference type="RefSeq" id="NP_001014504.1">
    <molecule id="A1Z7A6-1"/>
    <property type="nucleotide sequence ID" value="NM_001014504.3"/>
</dbReference>
<dbReference type="RefSeq" id="NP_001163085.1">
    <molecule id="A1Z7A6-2"/>
    <property type="nucleotide sequence ID" value="NM_001169614.2"/>
</dbReference>
<dbReference type="SMR" id="A1Z7A6"/>
<dbReference type="FunCoup" id="A1Z7A6">
    <property type="interactions" value="1595"/>
</dbReference>
<dbReference type="IntAct" id="A1Z7A6">
    <property type="interactions" value="4"/>
</dbReference>
<dbReference type="STRING" id="7227.FBpp0099488"/>
<dbReference type="PaxDb" id="7227-FBpp0099488"/>
<dbReference type="EnsemblMetazoa" id="FBtr0100140">
    <molecule id="A1Z7A6-1"/>
    <property type="protein sequence ID" value="FBpp0099488"/>
    <property type="gene ID" value="FBgn0050372"/>
</dbReference>
<dbReference type="EnsemblMetazoa" id="FBtr0300954">
    <molecule id="A1Z7A6-2"/>
    <property type="protein sequence ID" value="FBpp0290176"/>
    <property type="gene ID" value="FBgn0050372"/>
</dbReference>
<dbReference type="GeneID" id="35783"/>
<dbReference type="KEGG" id="dme:Dmel_CG30372"/>
<dbReference type="UCSC" id="CG30372-RB">
    <molecule id="A1Z7A6-1"/>
    <property type="organism name" value="d. melanogaster"/>
</dbReference>
<dbReference type="AGR" id="FB:FBgn0050372"/>
<dbReference type="CTD" id="35783"/>
<dbReference type="FlyBase" id="FBgn0050372">
    <property type="gene designation" value="Asap"/>
</dbReference>
<dbReference type="VEuPathDB" id="VectorBase:FBgn0050372"/>
<dbReference type="eggNOG" id="KOG0521">
    <property type="taxonomic scope" value="Eukaryota"/>
</dbReference>
<dbReference type="GeneTree" id="ENSGT00940000171062"/>
<dbReference type="InParanoid" id="A1Z7A6"/>
<dbReference type="OMA" id="ILMKMEC"/>
<dbReference type="OrthoDB" id="435430at2759"/>
<dbReference type="PhylomeDB" id="A1Z7A6"/>
<dbReference type="Reactome" id="R-DME-5620916">
    <property type="pathway name" value="VxPx cargo-targeting to cilium"/>
</dbReference>
<dbReference type="SignaLink" id="A1Z7A6"/>
<dbReference type="BioGRID-ORCS" id="35783">
    <property type="hits" value="0 hits in 3 CRISPR screens"/>
</dbReference>
<dbReference type="ChiTaRS" id="Trim9">
    <property type="organism name" value="fly"/>
</dbReference>
<dbReference type="GenomeRNAi" id="35783"/>
<dbReference type="PRO" id="PR:A1Z7A6"/>
<dbReference type="Proteomes" id="UP000000803">
    <property type="component" value="Chromosome 2R"/>
</dbReference>
<dbReference type="Bgee" id="FBgn0050372">
    <property type="expression patterns" value="Expressed in enterocyte of posterior adult midgut epithelium (Drosophila) in digestive tract and 241 other cell types or tissues"/>
</dbReference>
<dbReference type="ExpressionAtlas" id="A1Z7A6">
    <property type="expression patterns" value="baseline and differential"/>
</dbReference>
<dbReference type="GO" id="GO:0045177">
    <property type="term" value="C:apical part of cell"/>
    <property type="evidence" value="ECO:0000314"/>
    <property type="project" value="UniProtKB"/>
</dbReference>
<dbReference type="GO" id="GO:0005737">
    <property type="term" value="C:cytoplasm"/>
    <property type="evidence" value="ECO:0000314"/>
    <property type="project" value="FlyBase"/>
</dbReference>
<dbReference type="GO" id="GO:0005902">
    <property type="term" value="C:microvillus"/>
    <property type="evidence" value="ECO:0007669"/>
    <property type="project" value="UniProtKB-SubCell"/>
</dbReference>
<dbReference type="GO" id="GO:0005634">
    <property type="term" value="C:nucleus"/>
    <property type="evidence" value="ECO:0007669"/>
    <property type="project" value="UniProtKB-SubCell"/>
</dbReference>
<dbReference type="GO" id="GO:0005886">
    <property type="term" value="C:plasma membrane"/>
    <property type="evidence" value="ECO:0007669"/>
    <property type="project" value="UniProtKB-SubCell"/>
</dbReference>
<dbReference type="GO" id="GO:0005096">
    <property type="term" value="F:GTPase activator activity"/>
    <property type="evidence" value="ECO:0000255"/>
    <property type="project" value="FlyBase"/>
</dbReference>
<dbReference type="GO" id="GO:1901981">
    <property type="term" value="F:phosphatidylinositol phosphate binding"/>
    <property type="evidence" value="ECO:0000250"/>
    <property type="project" value="FlyBase"/>
</dbReference>
<dbReference type="GO" id="GO:0008270">
    <property type="term" value="F:zinc ion binding"/>
    <property type="evidence" value="ECO:0007669"/>
    <property type="project" value="UniProtKB-KW"/>
</dbReference>
<dbReference type="GO" id="GO:0001745">
    <property type="term" value="P:compound eye morphogenesis"/>
    <property type="evidence" value="ECO:0000315"/>
    <property type="project" value="UniProtKB"/>
</dbReference>
<dbReference type="GO" id="GO:1990386">
    <property type="term" value="P:mitotic cleavage furrow ingression"/>
    <property type="evidence" value="ECO:0000315"/>
    <property type="project" value="UniProtKB"/>
</dbReference>
<dbReference type="GO" id="GO:1903829">
    <property type="term" value="P:positive regulation of protein localization"/>
    <property type="evidence" value="ECO:0000315"/>
    <property type="project" value="UniProtKB"/>
</dbReference>
<dbReference type="GO" id="GO:1903358">
    <property type="term" value="P:regulation of Golgi organization"/>
    <property type="evidence" value="ECO:0000315"/>
    <property type="project" value="UniProtKB"/>
</dbReference>
<dbReference type="CDD" id="cd08834">
    <property type="entry name" value="ArfGap_ASAP"/>
    <property type="match status" value="1"/>
</dbReference>
<dbReference type="CDD" id="cd07604">
    <property type="entry name" value="BAR_ASAPs"/>
    <property type="match status" value="1"/>
</dbReference>
<dbReference type="CDD" id="cd13251">
    <property type="entry name" value="PH_ASAP"/>
    <property type="match status" value="1"/>
</dbReference>
<dbReference type="CDD" id="cd11821">
    <property type="entry name" value="SH3_ASAP"/>
    <property type="match status" value="1"/>
</dbReference>
<dbReference type="FunFam" id="2.30.30.40:FF:000012">
    <property type="entry name" value="Arf-GAP with SH3 domain, ANK repeat and PH domain-containing protein 2"/>
    <property type="match status" value="1"/>
</dbReference>
<dbReference type="FunFam" id="1.10.220.150:FF:000016">
    <property type="entry name" value="Uncharacterized protein, isoform B"/>
    <property type="match status" value="1"/>
</dbReference>
<dbReference type="FunFam" id="1.20.1270.60:FF:000065">
    <property type="entry name" value="Uncharacterized protein, isoform B"/>
    <property type="match status" value="1"/>
</dbReference>
<dbReference type="FunFam" id="1.25.40.950:FF:000003">
    <property type="entry name" value="Uncharacterized protein, isoform B"/>
    <property type="match status" value="1"/>
</dbReference>
<dbReference type="FunFam" id="2.30.29.30:FF:000322">
    <property type="entry name" value="Uncharacterized protein, isoform B"/>
    <property type="match status" value="1"/>
</dbReference>
<dbReference type="Gene3D" id="1.25.40.950">
    <property type="match status" value="1"/>
</dbReference>
<dbReference type="Gene3D" id="1.25.40.20">
    <property type="entry name" value="Ankyrin repeat-containing domain"/>
    <property type="match status" value="1"/>
</dbReference>
<dbReference type="Gene3D" id="1.10.220.150">
    <property type="entry name" value="Arf GTPase activating protein"/>
    <property type="match status" value="1"/>
</dbReference>
<dbReference type="Gene3D" id="1.20.1270.60">
    <property type="entry name" value="Arfaptin homology (AH) domain/BAR domain"/>
    <property type="match status" value="1"/>
</dbReference>
<dbReference type="Gene3D" id="2.30.29.30">
    <property type="entry name" value="Pleckstrin-homology domain (PH domain)/Phosphotyrosine-binding domain (PTB)"/>
    <property type="match status" value="1"/>
</dbReference>
<dbReference type="Gene3D" id="2.30.30.40">
    <property type="entry name" value="SH3 Domains"/>
    <property type="match status" value="1"/>
</dbReference>
<dbReference type="InterPro" id="IPR027267">
    <property type="entry name" value="AH/BAR_dom_sf"/>
</dbReference>
<dbReference type="InterPro" id="IPR002110">
    <property type="entry name" value="Ankyrin_rpt"/>
</dbReference>
<dbReference type="InterPro" id="IPR036770">
    <property type="entry name" value="Ankyrin_rpt-contain_sf"/>
</dbReference>
<dbReference type="InterPro" id="IPR037278">
    <property type="entry name" value="ARFGAP/RecO"/>
</dbReference>
<dbReference type="InterPro" id="IPR001164">
    <property type="entry name" value="ArfGAP_dom"/>
</dbReference>
<dbReference type="InterPro" id="IPR038508">
    <property type="entry name" value="ArfGAP_dom_sf"/>
</dbReference>
<dbReference type="InterPro" id="IPR043593">
    <property type="entry name" value="ASAP"/>
</dbReference>
<dbReference type="InterPro" id="IPR035836">
    <property type="entry name" value="ASAP1-like_SH3"/>
</dbReference>
<dbReference type="InterPro" id="IPR004148">
    <property type="entry name" value="BAR_dom"/>
</dbReference>
<dbReference type="InterPro" id="IPR011993">
    <property type="entry name" value="PH-like_dom_sf"/>
</dbReference>
<dbReference type="InterPro" id="IPR037844">
    <property type="entry name" value="PH_ASAP"/>
</dbReference>
<dbReference type="InterPro" id="IPR001849">
    <property type="entry name" value="PH_domain"/>
</dbReference>
<dbReference type="InterPro" id="IPR036028">
    <property type="entry name" value="SH3-like_dom_sf"/>
</dbReference>
<dbReference type="InterPro" id="IPR001452">
    <property type="entry name" value="SH3_domain"/>
</dbReference>
<dbReference type="PANTHER" id="PTHR45854:SF3">
    <property type="entry name" value="ARFGAP WITH SH3 DOMAIN, ANK REPEAT AND PH DOMAIN-CONTAINING PROTEIN"/>
    <property type="match status" value="1"/>
</dbReference>
<dbReference type="PANTHER" id="PTHR45854">
    <property type="entry name" value="ASAP FAMILY MEMBER"/>
    <property type="match status" value="1"/>
</dbReference>
<dbReference type="Pfam" id="PF12796">
    <property type="entry name" value="Ank_2"/>
    <property type="match status" value="1"/>
</dbReference>
<dbReference type="Pfam" id="PF01412">
    <property type="entry name" value="ArfGap"/>
    <property type="match status" value="1"/>
</dbReference>
<dbReference type="Pfam" id="PF16746">
    <property type="entry name" value="BAR_3"/>
    <property type="match status" value="1"/>
</dbReference>
<dbReference type="Pfam" id="PF00169">
    <property type="entry name" value="PH"/>
    <property type="match status" value="1"/>
</dbReference>
<dbReference type="Pfam" id="PF14604">
    <property type="entry name" value="SH3_9"/>
    <property type="match status" value="1"/>
</dbReference>
<dbReference type="PRINTS" id="PR00405">
    <property type="entry name" value="REVINTRACTNG"/>
</dbReference>
<dbReference type="PRINTS" id="PR00452">
    <property type="entry name" value="SH3DOMAIN"/>
</dbReference>
<dbReference type="SMART" id="SM00248">
    <property type="entry name" value="ANK"/>
    <property type="match status" value="2"/>
</dbReference>
<dbReference type="SMART" id="SM00105">
    <property type="entry name" value="ArfGap"/>
    <property type="match status" value="1"/>
</dbReference>
<dbReference type="SMART" id="SM00233">
    <property type="entry name" value="PH"/>
    <property type="match status" value="1"/>
</dbReference>
<dbReference type="SMART" id="SM00326">
    <property type="entry name" value="SH3"/>
    <property type="match status" value="1"/>
</dbReference>
<dbReference type="SUPFAM" id="SSF48403">
    <property type="entry name" value="Ankyrin repeat"/>
    <property type="match status" value="1"/>
</dbReference>
<dbReference type="SUPFAM" id="SSF57863">
    <property type="entry name" value="ArfGap/RecO-like zinc finger"/>
    <property type="match status" value="1"/>
</dbReference>
<dbReference type="SUPFAM" id="SSF103657">
    <property type="entry name" value="BAR/IMD domain-like"/>
    <property type="match status" value="1"/>
</dbReference>
<dbReference type="SUPFAM" id="SSF50729">
    <property type="entry name" value="PH domain-like"/>
    <property type="match status" value="1"/>
</dbReference>
<dbReference type="SUPFAM" id="SSF50044">
    <property type="entry name" value="SH3-domain"/>
    <property type="match status" value="1"/>
</dbReference>
<dbReference type="PROSITE" id="PS50297">
    <property type="entry name" value="ANK_REP_REGION"/>
    <property type="match status" value="1"/>
</dbReference>
<dbReference type="PROSITE" id="PS50088">
    <property type="entry name" value="ANK_REPEAT"/>
    <property type="match status" value="1"/>
</dbReference>
<dbReference type="PROSITE" id="PS50115">
    <property type="entry name" value="ARFGAP"/>
    <property type="match status" value="1"/>
</dbReference>
<dbReference type="PROSITE" id="PS50003">
    <property type="entry name" value="PH_DOMAIN"/>
    <property type="match status" value="1"/>
</dbReference>
<dbReference type="PROSITE" id="PS50002">
    <property type="entry name" value="SH3"/>
    <property type="match status" value="1"/>
</dbReference>
<accession>A1Z7A6</accession>
<accession>E1JH06</accession>
<accession>Q6AWJ6</accession>
<accession>Q95R80</accession>
<keyword id="KW-0025">Alternative splicing</keyword>
<keyword id="KW-0040">ANK repeat</keyword>
<keyword id="KW-1003">Cell membrane</keyword>
<keyword id="KW-0966">Cell projection</keyword>
<keyword id="KW-0963">Cytoplasm</keyword>
<keyword id="KW-0217">Developmental protein</keyword>
<keyword id="KW-0343">GTPase activation</keyword>
<keyword id="KW-0472">Membrane</keyword>
<keyword id="KW-0479">Metal-binding</keyword>
<keyword id="KW-0539">Nucleus</keyword>
<keyword id="KW-1185">Reference proteome</keyword>
<keyword id="KW-0677">Repeat</keyword>
<keyword id="KW-0728">SH3 domain</keyword>
<keyword id="KW-0862">Zinc</keyword>
<keyword id="KW-0863">Zinc-finger</keyword>
<gene>
    <name evidence="12" type="primary">Asap</name>
    <name evidence="12" type="synonym">Asap1</name>
    <name evidence="12" type="ORF">CG30372</name>
</gene>
<proteinExistence type="evidence at protein level"/>
<protein>
    <recommendedName>
        <fullName evidence="8">ArfGAP with SH3 domain, ANK repeat and PH domain-containing protein</fullName>
    </recommendedName>
</protein>
<feature type="chain" id="PRO_0000440690" description="ArfGAP with SH3 domain, ANK repeat and PH domain-containing protein">
    <location>
        <begin position="1"/>
        <end position="1155"/>
    </location>
</feature>
<feature type="domain" description="PH" evidence="2">
    <location>
        <begin position="310"/>
        <end position="404"/>
    </location>
</feature>
<feature type="domain" description="Arf-GAP" evidence="4">
    <location>
        <begin position="427"/>
        <end position="547"/>
    </location>
</feature>
<feature type="repeat" description="ANK 1" evidence="1">
    <location>
        <begin position="585"/>
        <end position="617"/>
    </location>
</feature>
<feature type="repeat" description="ANK 2" evidence="1">
    <location>
        <begin position="631"/>
        <end position="660"/>
    </location>
</feature>
<feature type="domain" description="SH3" evidence="3">
    <location>
        <begin position="1091"/>
        <end position="1155"/>
    </location>
</feature>
<feature type="zinc finger region" description="C4-type" evidence="4">
    <location>
        <begin position="442"/>
        <end position="466"/>
    </location>
</feature>
<feature type="region of interest" description="Disordered" evidence="5">
    <location>
        <begin position="700"/>
        <end position="764"/>
    </location>
</feature>
<feature type="region of interest" description="Disordered" evidence="5">
    <location>
        <begin position="793"/>
        <end position="885"/>
    </location>
</feature>
<feature type="region of interest" description="Disordered" evidence="5">
    <location>
        <begin position="911"/>
        <end position="943"/>
    </location>
</feature>
<feature type="region of interest" description="Disordered" evidence="5">
    <location>
        <begin position="974"/>
        <end position="1086"/>
    </location>
</feature>
<feature type="compositionally biased region" description="Acidic residues" evidence="5">
    <location>
        <begin position="709"/>
        <end position="719"/>
    </location>
</feature>
<feature type="compositionally biased region" description="Low complexity" evidence="5">
    <location>
        <begin position="742"/>
        <end position="755"/>
    </location>
</feature>
<feature type="compositionally biased region" description="Low complexity" evidence="5">
    <location>
        <begin position="808"/>
        <end position="824"/>
    </location>
</feature>
<feature type="compositionally biased region" description="Polar residues" evidence="5">
    <location>
        <begin position="839"/>
        <end position="849"/>
    </location>
</feature>
<feature type="compositionally biased region" description="Polar residues" evidence="5">
    <location>
        <begin position="1007"/>
        <end position="1017"/>
    </location>
</feature>
<feature type="compositionally biased region" description="Polar residues" evidence="5">
    <location>
        <begin position="1058"/>
        <end position="1078"/>
    </location>
</feature>
<feature type="splice variant" id="VSP_058985" description="In isoform C." evidence="8">
    <location>
        <begin position="724"/>
        <end position="751"/>
    </location>
</feature>
<reference evidence="13" key="1">
    <citation type="journal article" date="2000" name="Science">
        <title>The genome sequence of Drosophila melanogaster.</title>
        <authorList>
            <person name="Adams M.D."/>
            <person name="Celniker S.E."/>
            <person name="Holt R.A."/>
            <person name="Evans C.A."/>
            <person name="Gocayne J.D."/>
            <person name="Amanatides P.G."/>
            <person name="Scherer S.E."/>
            <person name="Li P.W."/>
            <person name="Hoskins R.A."/>
            <person name="Galle R.F."/>
            <person name="George R.A."/>
            <person name="Lewis S.E."/>
            <person name="Richards S."/>
            <person name="Ashburner M."/>
            <person name="Henderson S.N."/>
            <person name="Sutton G.G."/>
            <person name="Wortman J.R."/>
            <person name="Yandell M.D."/>
            <person name="Zhang Q."/>
            <person name="Chen L.X."/>
            <person name="Brandon R.C."/>
            <person name="Rogers Y.-H.C."/>
            <person name="Blazej R.G."/>
            <person name="Champe M."/>
            <person name="Pfeiffer B.D."/>
            <person name="Wan K.H."/>
            <person name="Doyle C."/>
            <person name="Baxter E.G."/>
            <person name="Helt G."/>
            <person name="Nelson C.R."/>
            <person name="Miklos G.L.G."/>
            <person name="Abril J.F."/>
            <person name="Agbayani A."/>
            <person name="An H.-J."/>
            <person name="Andrews-Pfannkoch C."/>
            <person name="Baldwin D."/>
            <person name="Ballew R.M."/>
            <person name="Basu A."/>
            <person name="Baxendale J."/>
            <person name="Bayraktaroglu L."/>
            <person name="Beasley E.M."/>
            <person name="Beeson K.Y."/>
            <person name="Benos P.V."/>
            <person name="Berman B.P."/>
            <person name="Bhandari D."/>
            <person name="Bolshakov S."/>
            <person name="Borkova D."/>
            <person name="Botchan M.R."/>
            <person name="Bouck J."/>
            <person name="Brokstein P."/>
            <person name="Brottier P."/>
            <person name="Burtis K.C."/>
            <person name="Busam D.A."/>
            <person name="Butler H."/>
            <person name="Cadieu E."/>
            <person name="Center A."/>
            <person name="Chandra I."/>
            <person name="Cherry J.M."/>
            <person name="Cawley S."/>
            <person name="Dahlke C."/>
            <person name="Davenport L.B."/>
            <person name="Davies P."/>
            <person name="de Pablos B."/>
            <person name="Delcher A."/>
            <person name="Deng Z."/>
            <person name="Mays A.D."/>
            <person name="Dew I."/>
            <person name="Dietz S.M."/>
            <person name="Dodson K."/>
            <person name="Doup L.E."/>
            <person name="Downes M."/>
            <person name="Dugan-Rocha S."/>
            <person name="Dunkov B.C."/>
            <person name="Dunn P."/>
            <person name="Durbin K.J."/>
            <person name="Evangelista C.C."/>
            <person name="Ferraz C."/>
            <person name="Ferriera S."/>
            <person name="Fleischmann W."/>
            <person name="Fosler C."/>
            <person name="Gabrielian A.E."/>
            <person name="Garg N.S."/>
            <person name="Gelbart W.M."/>
            <person name="Glasser K."/>
            <person name="Glodek A."/>
            <person name="Gong F."/>
            <person name="Gorrell J.H."/>
            <person name="Gu Z."/>
            <person name="Guan P."/>
            <person name="Harris M."/>
            <person name="Harris N.L."/>
            <person name="Harvey D.A."/>
            <person name="Heiman T.J."/>
            <person name="Hernandez J.R."/>
            <person name="Houck J."/>
            <person name="Hostin D."/>
            <person name="Houston K.A."/>
            <person name="Howland T.J."/>
            <person name="Wei M.-H."/>
            <person name="Ibegwam C."/>
            <person name="Jalali M."/>
            <person name="Kalush F."/>
            <person name="Karpen G.H."/>
            <person name="Ke Z."/>
            <person name="Kennison J.A."/>
            <person name="Ketchum K.A."/>
            <person name="Kimmel B.E."/>
            <person name="Kodira C.D."/>
            <person name="Kraft C.L."/>
            <person name="Kravitz S."/>
            <person name="Kulp D."/>
            <person name="Lai Z."/>
            <person name="Lasko P."/>
            <person name="Lei Y."/>
            <person name="Levitsky A.A."/>
            <person name="Li J.H."/>
            <person name="Li Z."/>
            <person name="Liang Y."/>
            <person name="Lin X."/>
            <person name="Liu X."/>
            <person name="Mattei B."/>
            <person name="McIntosh T.C."/>
            <person name="McLeod M.P."/>
            <person name="McPherson D."/>
            <person name="Merkulov G."/>
            <person name="Milshina N.V."/>
            <person name="Mobarry C."/>
            <person name="Morris J."/>
            <person name="Moshrefi A."/>
            <person name="Mount S.M."/>
            <person name="Moy M."/>
            <person name="Murphy B."/>
            <person name="Murphy L."/>
            <person name="Muzny D.M."/>
            <person name="Nelson D.L."/>
            <person name="Nelson D.R."/>
            <person name="Nelson K.A."/>
            <person name="Nixon K."/>
            <person name="Nusskern D.R."/>
            <person name="Pacleb J.M."/>
            <person name="Palazzolo M."/>
            <person name="Pittman G.S."/>
            <person name="Pan S."/>
            <person name="Pollard J."/>
            <person name="Puri V."/>
            <person name="Reese M.G."/>
            <person name="Reinert K."/>
            <person name="Remington K."/>
            <person name="Saunders R.D.C."/>
            <person name="Scheeler F."/>
            <person name="Shen H."/>
            <person name="Shue B.C."/>
            <person name="Siden-Kiamos I."/>
            <person name="Simpson M."/>
            <person name="Skupski M.P."/>
            <person name="Smith T.J."/>
            <person name="Spier E."/>
            <person name="Spradling A.C."/>
            <person name="Stapleton M."/>
            <person name="Strong R."/>
            <person name="Sun E."/>
            <person name="Svirskas R."/>
            <person name="Tector C."/>
            <person name="Turner R."/>
            <person name="Venter E."/>
            <person name="Wang A.H."/>
            <person name="Wang X."/>
            <person name="Wang Z.-Y."/>
            <person name="Wassarman D.A."/>
            <person name="Weinstock G.M."/>
            <person name="Weissenbach J."/>
            <person name="Williams S.M."/>
            <person name="Woodage T."/>
            <person name="Worley K.C."/>
            <person name="Wu D."/>
            <person name="Yang S."/>
            <person name="Yao Q.A."/>
            <person name="Ye J."/>
            <person name="Yeh R.-F."/>
            <person name="Zaveri J.S."/>
            <person name="Zhan M."/>
            <person name="Zhang G."/>
            <person name="Zhao Q."/>
            <person name="Zheng L."/>
            <person name="Zheng X.H."/>
            <person name="Zhong F.N."/>
            <person name="Zhong W."/>
            <person name="Zhou X."/>
            <person name="Zhu S.C."/>
            <person name="Zhu X."/>
            <person name="Smith H.O."/>
            <person name="Gibbs R.A."/>
            <person name="Myers E.W."/>
            <person name="Rubin G.M."/>
            <person name="Venter J.C."/>
        </authorList>
    </citation>
    <scope>NUCLEOTIDE SEQUENCE [LARGE SCALE GENOMIC DNA]</scope>
    <source>
        <strain evidence="13">Berkeley</strain>
    </source>
</reference>
<reference evidence="13" key="2">
    <citation type="journal article" date="2002" name="Genome Biol.">
        <title>Annotation of the Drosophila melanogaster euchromatic genome: a systematic review.</title>
        <authorList>
            <person name="Misra S."/>
            <person name="Crosby M.A."/>
            <person name="Mungall C.J."/>
            <person name="Matthews B.B."/>
            <person name="Campbell K.S."/>
            <person name="Hradecky P."/>
            <person name="Huang Y."/>
            <person name="Kaminker J.S."/>
            <person name="Millburn G.H."/>
            <person name="Prochnik S.E."/>
            <person name="Smith C.D."/>
            <person name="Tupy J.L."/>
            <person name="Whitfield E.J."/>
            <person name="Bayraktaroglu L."/>
            <person name="Berman B.P."/>
            <person name="Bettencourt B.R."/>
            <person name="Celniker S.E."/>
            <person name="de Grey A.D.N.J."/>
            <person name="Drysdale R.A."/>
            <person name="Harris N.L."/>
            <person name="Richter J."/>
            <person name="Russo S."/>
            <person name="Schroeder A.J."/>
            <person name="Shu S.Q."/>
            <person name="Stapleton M."/>
            <person name="Yamada C."/>
            <person name="Ashburner M."/>
            <person name="Gelbart W.M."/>
            <person name="Rubin G.M."/>
            <person name="Lewis S.E."/>
        </authorList>
    </citation>
    <scope>GENOME REANNOTATION</scope>
    <source>
        <strain evidence="13">Berkeley</strain>
    </source>
</reference>
<reference evidence="10 11" key="3">
    <citation type="submission" date="2007-11" db="EMBL/GenBank/DDBJ databases">
        <authorList>
            <person name="Stapleton M."/>
            <person name="Carlson J."/>
            <person name="Chavez C."/>
            <person name="Frise E."/>
            <person name="George R."/>
            <person name="Pacleb J."/>
            <person name="Wan K."/>
            <person name="Kapadia B."/>
            <person name="Park S."/>
            <person name="Yu C."/>
            <person name="Rubin G.M."/>
            <person name="Celniker S."/>
        </authorList>
    </citation>
    <scope>NUCLEOTIDE SEQUENCE [LARGE SCALE MRNA] (ISOFORM B)</scope>
    <scope>NUCLEOTIDE SEQUENCE [LARGE SCALE MRNA] OF 193-1127 (ISOFORM C)</scope>
    <source>
        <strain evidence="10 11">Berkeley</strain>
        <tissue evidence="10 11">Larva</tissue>
        <tissue evidence="10 11">Pupae</tissue>
    </source>
</reference>
<reference evidence="9" key="4">
    <citation type="journal article" date="2002" name="Genome Biol.">
        <title>A Drosophila full-length cDNA resource.</title>
        <authorList>
            <person name="Stapleton M."/>
            <person name="Carlson J.W."/>
            <person name="Brokstein P."/>
            <person name="Yu C."/>
            <person name="Champe M."/>
            <person name="George R.A."/>
            <person name="Guarin H."/>
            <person name="Kronmiller B."/>
            <person name="Pacleb J.M."/>
            <person name="Park S."/>
            <person name="Wan K.H."/>
            <person name="Rubin G.M."/>
            <person name="Celniker S.E."/>
        </authorList>
    </citation>
    <scope>NUCLEOTIDE SEQUENCE [LARGE SCALE MRNA] OF 565-1155 (ISOFORM B)</scope>
    <source>
        <strain evidence="9">Berkeley</strain>
        <tissue evidence="9">Embryo</tissue>
    </source>
</reference>
<reference evidence="8" key="5">
    <citation type="journal article" date="2011" name="Mol. Biol. Cell">
        <title>Role for a Cindr-Arf6 axis in patterning emerging epithelia.</title>
        <authorList>
            <person name="Johnson R.I."/>
            <person name="Sedgwick A."/>
            <person name="D'Souza-Schorey C."/>
            <person name="Cagan R.L."/>
        </authorList>
    </citation>
    <scope>FUNCTION</scope>
    <scope>INTERACTION WITH CINDR</scope>
    <scope>SUBCELLULAR LOCATION</scope>
    <scope>DISRUPTION PHENOTYPE</scope>
</reference>
<reference evidence="8" key="6">
    <citation type="journal article" date="2016" name="Mol. Biol. Cell">
        <title>The Arf GAP Asap promotes Arf1 function at the Golgi for cleavage furrow biosynthesis in Drosophila.</title>
        <authorList>
            <person name="Rodrigues F.F."/>
            <person name="Shao W."/>
            <person name="Harris T.J."/>
        </authorList>
    </citation>
    <scope>FUNCTION</scope>
    <scope>SUBCELLULAR LOCATION</scope>
    <scope>DEVELOPMENTAL STAGE</scope>
    <scope>DISRUPTION PHENOTYPE</scope>
</reference>
<comment type="function">
    <text evidence="6 7 8">Probable GTPase-activating protein (GAP) for Arf family proteins (Probable). Involved in Golgi apparatus organization by targeting Arf1 to the Golgi, which may be important for membrane trafficking during epithelial morphogenesis (PubMed:27535433). Regulates the positioning of interommatidial precursor cells during compound eye morphogenesis together with Arf6 and Cindr (PubMed:21976699). Required for cleavage furrow ingression in early embryonic cells (PubMed:27535433).</text>
</comment>
<comment type="subunit">
    <text evidence="6">Interacts with Cindr.</text>
</comment>
<comment type="subcellular location">
    <subcellularLocation>
        <location evidence="6 7">Cytoplasm</location>
    </subcellularLocation>
    <subcellularLocation>
        <location evidence="7">Nucleus</location>
    </subcellularLocation>
    <subcellularLocation>
        <location>Cell membrane</location>
        <topology evidence="6 7">Peripheral membrane protein</topology>
    </subcellularLocation>
    <subcellularLocation>
        <location evidence="7">Cell projection</location>
        <location evidence="7">Microvillus</location>
    </subcellularLocation>
    <text evidence="6 7">Detected in large puncta at the plasma membrane (PubMed:21976699, PubMed:27535433). Excluded from the nucleus at interphase (PubMed:27535433). Enriched in the nucleus at prometaphase (PubMed:27535433).</text>
</comment>
<comment type="alternative products">
    <event type="alternative splicing"/>
    <isoform>
        <id>A1Z7A6-1</id>
        <name evidence="12">B</name>
        <sequence type="displayed"/>
    </isoform>
    <isoform>
        <id>A1Z7A6-2</id>
        <name evidence="12">C</name>
        <sequence type="described" ref="VSP_058985"/>
    </isoform>
</comment>
<comment type="developmental stage">
    <text evidence="7">Expressed in the ectoderm of embryos (at protein level).</text>
</comment>
<comment type="disruption phenotype">
    <text evidence="6 7">RNAi-mediated knockdown results in defective compound eye morphogenesis (PubMed:21976699). Maternal RNAi-mediated knockdown results in partial female infertility and, in early embryos, abnormal aggregation of Golgi apparatus and disrupted cleavage furrow ingression (PubMed:27535433).</text>
</comment>
<comment type="sequence caution" evidence="8">
    <conflict type="erroneous initiation">
        <sequence resource="EMBL-CDS" id="AAL29125"/>
    </conflict>
    <text>Truncated N-terminus.</text>
</comment>